<evidence type="ECO:0000255" key="1">
    <source>
        <dbReference type="HAMAP-Rule" id="MF_00643"/>
    </source>
</evidence>
<sequence>MTTNTQYIYPIFTVRWLAVHALAVPTVFFLGSISAMQFIQR</sequence>
<protein>
    <recommendedName>
        <fullName evidence="1">Cytochrome b559 subunit beta</fullName>
    </recommendedName>
    <alternativeName>
        <fullName evidence="1">PSII reaction center subunit VI</fullName>
    </alternativeName>
</protein>
<geneLocation type="chloroplast"/>
<name>PSBF_NEPOL</name>
<accession>Q9TKY2</accession>
<organism>
    <name type="scientific">Nephroselmis olivacea</name>
    <name type="common">Green alga</name>
    <dbReference type="NCBI Taxonomy" id="31312"/>
    <lineage>
        <taxon>Eukaryota</taxon>
        <taxon>Viridiplantae</taxon>
        <taxon>Chlorophyta</taxon>
        <taxon>Nephroselmidophyceae</taxon>
        <taxon>Nephroselmidales</taxon>
        <taxon>Nephroselmidaceae</taxon>
        <taxon>Nephroselmis</taxon>
    </lineage>
</organism>
<proteinExistence type="inferred from homology"/>
<dbReference type="EMBL" id="AF137379">
    <property type="protein sequence ID" value="AAD54834.1"/>
    <property type="molecule type" value="Genomic_DNA"/>
</dbReference>
<dbReference type="RefSeq" id="NP_050863.1">
    <property type="nucleotide sequence ID" value="NC_000927.1"/>
</dbReference>
<dbReference type="SMR" id="Q9TKY2"/>
<dbReference type="GeneID" id="802050"/>
<dbReference type="GO" id="GO:0009535">
    <property type="term" value="C:chloroplast thylakoid membrane"/>
    <property type="evidence" value="ECO:0007669"/>
    <property type="project" value="UniProtKB-SubCell"/>
</dbReference>
<dbReference type="GO" id="GO:0009539">
    <property type="term" value="C:photosystem II reaction center"/>
    <property type="evidence" value="ECO:0007669"/>
    <property type="project" value="InterPro"/>
</dbReference>
<dbReference type="GO" id="GO:0009055">
    <property type="term" value="F:electron transfer activity"/>
    <property type="evidence" value="ECO:0007669"/>
    <property type="project" value="UniProtKB-UniRule"/>
</dbReference>
<dbReference type="GO" id="GO:0020037">
    <property type="term" value="F:heme binding"/>
    <property type="evidence" value="ECO:0007669"/>
    <property type="project" value="InterPro"/>
</dbReference>
<dbReference type="GO" id="GO:0005506">
    <property type="term" value="F:iron ion binding"/>
    <property type="evidence" value="ECO:0007669"/>
    <property type="project" value="UniProtKB-UniRule"/>
</dbReference>
<dbReference type="GO" id="GO:0009767">
    <property type="term" value="P:photosynthetic electron transport chain"/>
    <property type="evidence" value="ECO:0007669"/>
    <property type="project" value="InterPro"/>
</dbReference>
<dbReference type="HAMAP" id="MF_00643">
    <property type="entry name" value="PSII_PsbF"/>
    <property type="match status" value="1"/>
</dbReference>
<dbReference type="InterPro" id="IPR006241">
    <property type="entry name" value="PSII_cyt_b559_bsu"/>
</dbReference>
<dbReference type="InterPro" id="IPR006216">
    <property type="entry name" value="PSII_cyt_b559_CS"/>
</dbReference>
<dbReference type="InterPro" id="IPR013081">
    <property type="entry name" value="PSII_cyt_b559_N"/>
</dbReference>
<dbReference type="NCBIfam" id="TIGR01333">
    <property type="entry name" value="cyt_b559_beta"/>
    <property type="match status" value="1"/>
</dbReference>
<dbReference type="Pfam" id="PF00283">
    <property type="entry name" value="Cytochrom_B559"/>
    <property type="match status" value="1"/>
</dbReference>
<dbReference type="PIRSF" id="PIRSF000037">
    <property type="entry name" value="PsbF"/>
    <property type="match status" value="1"/>
</dbReference>
<dbReference type="SUPFAM" id="SSF161045">
    <property type="entry name" value="Cytochrome b559 subunits"/>
    <property type="match status" value="1"/>
</dbReference>
<dbReference type="PROSITE" id="PS00537">
    <property type="entry name" value="CYTOCHROME_B559"/>
    <property type="match status" value="1"/>
</dbReference>
<feature type="chain" id="PRO_0000200425" description="Cytochrome b559 subunit beta">
    <location>
        <begin position="1"/>
        <end position="41"/>
    </location>
</feature>
<feature type="transmembrane region" description="Helical" evidence="1">
    <location>
        <begin position="16"/>
        <end position="32"/>
    </location>
</feature>
<feature type="binding site" description="axial binding residue" evidence="1">
    <location>
        <position position="20"/>
    </location>
    <ligand>
        <name>heme</name>
        <dbReference type="ChEBI" id="CHEBI:30413"/>
        <note>ligand shared with alpha subunit</note>
    </ligand>
    <ligandPart>
        <name>Fe</name>
        <dbReference type="ChEBI" id="CHEBI:18248"/>
    </ligandPart>
</feature>
<comment type="function">
    <text evidence="1">This b-type cytochrome is tightly associated with the reaction center of photosystem II (PSII). PSII is a light-driven water:plastoquinone oxidoreductase that uses light energy to abstract electrons from H(2)O, generating O(2) and a proton gradient subsequently used for ATP formation. It consists of a core antenna complex that captures photons, and an electron transfer chain that converts photonic excitation into a charge separation.</text>
</comment>
<comment type="cofactor">
    <cofactor evidence="1">
        <name>heme b</name>
        <dbReference type="ChEBI" id="CHEBI:60344"/>
    </cofactor>
    <text evidence="1">With its partner (PsbE) binds heme. PSII binds additional chlorophylls, carotenoids and specific lipids.</text>
</comment>
<comment type="subunit">
    <text evidence="1">Heterodimer of an alpha subunit and a beta subunit. PSII is composed of 1 copy each of membrane proteins PsbA, PsbB, PsbC, PsbD, PsbE, PsbF, PsbH, PsbI, PsbJ, PsbK, PsbL, PsbM, PsbT, PsbX, PsbY, PsbZ, Psb30/Ycf12, at least 3 peripheral proteins of the oxygen-evolving complex and a large number of cofactors. It forms dimeric complexes.</text>
</comment>
<comment type="subcellular location">
    <subcellularLocation>
        <location evidence="1">Plastid</location>
        <location evidence="1">Chloroplast thylakoid membrane</location>
        <topology evidence="1">Single-pass membrane protein</topology>
    </subcellularLocation>
</comment>
<comment type="similarity">
    <text evidence="1">Belongs to the PsbE/PsbF family.</text>
</comment>
<reference key="1">
    <citation type="journal article" date="1999" name="Proc. Natl. Acad. Sci. U.S.A.">
        <title>The complete chloroplast DNA sequence of the green alga Nephroselmis olivacea: insights into the architecture of ancestral chloroplast genomes.</title>
        <authorList>
            <person name="Turmel M."/>
            <person name="Otis C."/>
            <person name="Lemieux C."/>
        </authorList>
    </citation>
    <scope>NUCLEOTIDE SEQUENCE [LARGE SCALE GENOMIC DNA]</scope>
    <source>
        <strain>NIES-484 / S-N-5-8</strain>
    </source>
</reference>
<gene>
    <name evidence="1" type="primary">psbF</name>
</gene>
<keyword id="KW-0150">Chloroplast</keyword>
<keyword id="KW-0249">Electron transport</keyword>
<keyword id="KW-0349">Heme</keyword>
<keyword id="KW-0408">Iron</keyword>
<keyword id="KW-0472">Membrane</keyword>
<keyword id="KW-0479">Metal-binding</keyword>
<keyword id="KW-0602">Photosynthesis</keyword>
<keyword id="KW-0604">Photosystem II</keyword>
<keyword id="KW-0934">Plastid</keyword>
<keyword id="KW-0793">Thylakoid</keyword>
<keyword id="KW-0812">Transmembrane</keyword>
<keyword id="KW-1133">Transmembrane helix</keyword>
<keyword id="KW-0813">Transport</keyword>